<sequence length="298" mass="33999">MESFQKVEKIGEGTYGVVYKAKNKVTGETVALKKIRLDTETEGVPSTAIREISLLKELNHPNIVKLHDVIHTENKLYLVFEFLHQDLKRFMDSSTVTGISLPLVKSYLFQLLQGLAFCHSHRVLHRDLKPQNLLINAQGEIKLADFGLARAFGVPVRTYTHEVVTLWYRAPEILLGCKYYSTAVDIWSLGCIFAEMITRKALFPGDSEIDQLFRIFRTLGTPDESIWPGVTSMPDYKPSFPKWARQDLSKVVPPLDEDGRDLLGQMLIYDPNKRISAKNALVHRFFRDVTMPVPPLRL</sequence>
<keyword id="KW-0067">ATP-binding</keyword>
<keyword id="KW-0131">Cell cycle</keyword>
<keyword id="KW-0132">Cell division</keyword>
<keyword id="KW-0418">Kinase</keyword>
<keyword id="KW-0498">Mitosis</keyword>
<keyword id="KW-0547">Nucleotide-binding</keyword>
<keyword id="KW-0597">Phosphoprotein</keyword>
<keyword id="KW-1185">Reference proteome</keyword>
<keyword id="KW-0723">Serine/threonine-protein kinase</keyword>
<keyword id="KW-0808">Transferase</keyword>
<reference key="1">
    <citation type="journal article" date="1992" name="Dev. Biol.">
        <title>Isolation and characterization of goldfish cdk2, a cognate variant of the cell cycle regulator cdc2.</title>
        <authorList>
            <person name="Hirai T."/>
            <person name="Yamashita M."/>
            <person name="Yoshikuni M."/>
            <person name="Tokumoto T."/>
            <person name="Kajiura H."/>
            <person name="Sakai N."/>
            <person name="Nagahama Y."/>
        </authorList>
    </citation>
    <scope>NUCLEOTIDE SEQUENCE [MRNA]</scope>
    <scope>FUNCTION</scope>
    <scope>CATALYTIC ACTIVITY</scope>
    <source>
        <tissue>Oocyte</tissue>
    </source>
</reference>
<feature type="chain" id="PRO_0000085773" description="Cyclin-dependent kinase 2">
    <location>
        <begin position="1"/>
        <end position="298"/>
    </location>
</feature>
<feature type="domain" description="Protein kinase" evidence="3">
    <location>
        <begin position="4"/>
        <end position="286"/>
    </location>
</feature>
<feature type="active site" description="Proton acceptor" evidence="3 4">
    <location>
        <position position="127"/>
    </location>
</feature>
<feature type="binding site" evidence="3">
    <location>
        <begin position="10"/>
        <end position="18"/>
    </location>
    <ligand>
        <name>ATP</name>
        <dbReference type="ChEBI" id="CHEBI:30616"/>
    </ligand>
</feature>
<feature type="binding site" evidence="3">
    <location>
        <position position="33"/>
    </location>
    <ligand>
        <name>ATP</name>
        <dbReference type="ChEBI" id="CHEBI:30616"/>
    </ligand>
</feature>
<feature type="binding site" evidence="3">
    <location>
        <begin position="81"/>
        <end position="83"/>
    </location>
    <ligand>
        <name>ATP</name>
        <dbReference type="ChEBI" id="CHEBI:30616"/>
    </ligand>
</feature>
<feature type="binding site" evidence="3">
    <location>
        <position position="86"/>
    </location>
    <ligand>
        <name>ATP</name>
        <dbReference type="ChEBI" id="CHEBI:30616"/>
    </ligand>
</feature>
<feature type="binding site" evidence="3">
    <location>
        <begin position="129"/>
        <end position="132"/>
    </location>
    <ligand>
        <name>ATP</name>
        <dbReference type="ChEBI" id="CHEBI:30616"/>
    </ligand>
</feature>
<feature type="binding site" evidence="3">
    <location>
        <position position="145"/>
    </location>
    <ligand>
        <name>ATP</name>
        <dbReference type="ChEBI" id="CHEBI:30616"/>
    </ligand>
</feature>
<feature type="modified residue" description="Phosphothreonine" evidence="2">
    <location>
        <position position="14"/>
    </location>
</feature>
<feature type="modified residue" description="Phosphotyrosine" evidence="2">
    <location>
        <position position="15"/>
    </location>
</feature>
<feature type="modified residue" description="Phosphothreonine; by CAK" evidence="2">
    <location>
        <position position="160"/>
    </location>
</feature>
<comment type="function">
    <text evidence="2 5">Serine/threonine-protein kinase involved in the control of the cell cycle; essential for meiosis, but dispensable for mitosis (PubMed:1339336). Triggers duplication of centrosomes and DNA. Acts at the G1-S transition to promote the E2F transcriptional program and the initiation of DNA synthesis, and modulates G2 progression; controls the timing of entry into mitosis/meiosis by controlling the subsequent activation of cyclin B/CDK1 by phosphorylation, and coordinates the activation of cyclin B/CDK1 at the centrosome and in the nucleus. Crucial role in orchestrating a fine balance between cellular proliferation, cell death, and DNA repair in embryonic stem cells (ESCs). Activity of CDK2 is maximal during S phase and G2; activated by interaction with cyclin E during the early stages of DNA synthesis to permit G1-S transition, and subsequently activated by cyclin A2 (cyclin A1 in germ cells) during the late stages of DNA replication to drive the transition from S phase to mitosis, the G2 phase (By similarity).</text>
</comment>
<comment type="catalytic activity">
    <reaction evidence="5">
        <text>L-seryl-[protein] + ATP = O-phospho-L-seryl-[protein] + ADP + H(+)</text>
        <dbReference type="Rhea" id="RHEA:17989"/>
        <dbReference type="Rhea" id="RHEA-COMP:9863"/>
        <dbReference type="Rhea" id="RHEA-COMP:11604"/>
        <dbReference type="ChEBI" id="CHEBI:15378"/>
        <dbReference type="ChEBI" id="CHEBI:29999"/>
        <dbReference type="ChEBI" id="CHEBI:30616"/>
        <dbReference type="ChEBI" id="CHEBI:83421"/>
        <dbReference type="ChEBI" id="CHEBI:456216"/>
        <dbReference type="EC" id="2.7.11.22"/>
    </reaction>
</comment>
<comment type="catalytic activity">
    <reaction evidence="5">
        <text>L-threonyl-[protein] + ATP = O-phospho-L-threonyl-[protein] + ADP + H(+)</text>
        <dbReference type="Rhea" id="RHEA:46608"/>
        <dbReference type="Rhea" id="RHEA-COMP:11060"/>
        <dbReference type="Rhea" id="RHEA-COMP:11605"/>
        <dbReference type="ChEBI" id="CHEBI:15378"/>
        <dbReference type="ChEBI" id="CHEBI:30013"/>
        <dbReference type="ChEBI" id="CHEBI:30616"/>
        <dbReference type="ChEBI" id="CHEBI:61977"/>
        <dbReference type="ChEBI" id="CHEBI:456216"/>
        <dbReference type="EC" id="2.7.11.22"/>
    </reaction>
</comment>
<comment type="activity regulation">
    <text evidence="1">Phosphorylation at Thr-14 or Tyr-15 inactivates the enzyme, while phosphorylation at Thr-160 activates it.</text>
</comment>
<comment type="similarity">
    <text evidence="6">Belongs to the protein kinase superfamily. CMGC Ser/Thr protein kinase family. CDC2/CDKX subfamily.</text>
</comment>
<gene>
    <name type="primary">cdk2</name>
</gene>
<accession>P43450</accession>
<dbReference type="EC" id="2.7.11.22" evidence="5"/>
<dbReference type="EMBL" id="S40289">
    <property type="protein sequence ID" value="AAB22550.1"/>
    <property type="molecule type" value="mRNA"/>
</dbReference>
<dbReference type="PIR" id="A44878">
    <property type="entry name" value="A44878"/>
</dbReference>
<dbReference type="RefSeq" id="XP_026098075.1">
    <property type="nucleotide sequence ID" value="XM_026242290.1"/>
</dbReference>
<dbReference type="RefSeq" id="XP_026098076.1">
    <property type="nucleotide sequence ID" value="XM_026242291.1"/>
</dbReference>
<dbReference type="SMR" id="P43450"/>
<dbReference type="GeneID" id="113069258"/>
<dbReference type="OrthoDB" id="1732493at2759"/>
<dbReference type="BRENDA" id="2.7.11.22">
    <property type="organism ID" value="1175"/>
</dbReference>
<dbReference type="Proteomes" id="UP000515129">
    <property type="component" value="Unplaced"/>
</dbReference>
<dbReference type="GO" id="GO:0000307">
    <property type="term" value="C:cyclin-dependent protein kinase holoenzyme complex"/>
    <property type="evidence" value="ECO:0007669"/>
    <property type="project" value="TreeGrafter"/>
</dbReference>
<dbReference type="GO" id="GO:0005737">
    <property type="term" value="C:cytoplasm"/>
    <property type="evidence" value="ECO:0007669"/>
    <property type="project" value="TreeGrafter"/>
</dbReference>
<dbReference type="GO" id="GO:0005634">
    <property type="term" value="C:nucleus"/>
    <property type="evidence" value="ECO:0007669"/>
    <property type="project" value="TreeGrafter"/>
</dbReference>
<dbReference type="GO" id="GO:0005524">
    <property type="term" value="F:ATP binding"/>
    <property type="evidence" value="ECO:0007669"/>
    <property type="project" value="UniProtKB-KW"/>
</dbReference>
<dbReference type="GO" id="GO:0030332">
    <property type="term" value="F:cyclin binding"/>
    <property type="evidence" value="ECO:0007669"/>
    <property type="project" value="TreeGrafter"/>
</dbReference>
<dbReference type="GO" id="GO:0097472">
    <property type="term" value="F:cyclin-dependent protein kinase activity"/>
    <property type="evidence" value="ECO:0000250"/>
    <property type="project" value="UniProtKB"/>
</dbReference>
<dbReference type="GO" id="GO:0004693">
    <property type="term" value="F:cyclin-dependent protein serine/threonine kinase activity"/>
    <property type="evidence" value="ECO:0000250"/>
    <property type="project" value="UniProtKB"/>
</dbReference>
<dbReference type="GO" id="GO:0106310">
    <property type="term" value="F:protein serine kinase activity"/>
    <property type="evidence" value="ECO:0007669"/>
    <property type="project" value="RHEA"/>
</dbReference>
<dbReference type="GO" id="GO:0051301">
    <property type="term" value="P:cell division"/>
    <property type="evidence" value="ECO:0007669"/>
    <property type="project" value="UniProtKB-KW"/>
</dbReference>
<dbReference type="GO" id="GO:0000082">
    <property type="term" value="P:G1/S transition of mitotic cell cycle"/>
    <property type="evidence" value="ECO:0007669"/>
    <property type="project" value="TreeGrafter"/>
</dbReference>
<dbReference type="GO" id="GO:0006468">
    <property type="term" value="P:protein phosphorylation"/>
    <property type="evidence" value="ECO:0000250"/>
    <property type="project" value="UniProtKB"/>
</dbReference>
<dbReference type="GO" id="GO:0010389">
    <property type="term" value="P:regulation of G2/M transition of mitotic cell cycle"/>
    <property type="evidence" value="ECO:0007669"/>
    <property type="project" value="TreeGrafter"/>
</dbReference>
<dbReference type="GO" id="GO:0010468">
    <property type="term" value="P:regulation of gene expression"/>
    <property type="evidence" value="ECO:0007669"/>
    <property type="project" value="TreeGrafter"/>
</dbReference>
<dbReference type="GO" id="GO:0007165">
    <property type="term" value="P:signal transduction"/>
    <property type="evidence" value="ECO:0007669"/>
    <property type="project" value="TreeGrafter"/>
</dbReference>
<dbReference type="CDD" id="cd07860">
    <property type="entry name" value="STKc_CDK2_3"/>
    <property type="match status" value="1"/>
</dbReference>
<dbReference type="FunFam" id="1.10.510.10:FF:000144">
    <property type="entry name" value="Cyclin-dependent kinase 2"/>
    <property type="match status" value="1"/>
</dbReference>
<dbReference type="FunFam" id="3.30.200.20:FF:000599">
    <property type="entry name" value="Cyclin-dependent kinase 2"/>
    <property type="match status" value="1"/>
</dbReference>
<dbReference type="Gene3D" id="3.30.200.20">
    <property type="entry name" value="Phosphorylase Kinase, domain 1"/>
    <property type="match status" value="1"/>
</dbReference>
<dbReference type="Gene3D" id="1.10.510.10">
    <property type="entry name" value="Transferase(Phosphotransferase) domain 1"/>
    <property type="match status" value="1"/>
</dbReference>
<dbReference type="InterPro" id="IPR050108">
    <property type="entry name" value="CDK"/>
</dbReference>
<dbReference type="InterPro" id="IPR011009">
    <property type="entry name" value="Kinase-like_dom_sf"/>
</dbReference>
<dbReference type="InterPro" id="IPR000719">
    <property type="entry name" value="Prot_kinase_dom"/>
</dbReference>
<dbReference type="InterPro" id="IPR017441">
    <property type="entry name" value="Protein_kinase_ATP_BS"/>
</dbReference>
<dbReference type="InterPro" id="IPR008271">
    <property type="entry name" value="Ser/Thr_kinase_AS"/>
</dbReference>
<dbReference type="PANTHER" id="PTHR24056">
    <property type="entry name" value="CELL DIVISION PROTEIN KINASE"/>
    <property type="match status" value="1"/>
</dbReference>
<dbReference type="PANTHER" id="PTHR24056:SF254">
    <property type="entry name" value="CYCLIN-DEPENDENT KINASE 2"/>
    <property type="match status" value="1"/>
</dbReference>
<dbReference type="Pfam" id="PF00069">
    <property type="entry name" value="Pkinase"/>
    <property type="match status" value="1"/>
</dbReference>
<dbReference type="SMART" id="SM00220">
    <property type="entry name" value="S_TKc"/>
    <property type="match status" value="1"/>
</dbReference>
<dbReference type="SUPFAM" id="SSF56112">
    <property type="entry name" value="Protein kinase-like (PK-like)"/>
    <property type="match status" value="1"/>
</dbReference>
<dbReference type="PROSITE" id="PS00107">
    <property type="entry name" value="PROTEIN_KINASE_ATP"/>
    <property type="match status" value="1"/>
</dbReference>
<dbReference type="PROSITE" id="PS50011">
    <property type="entry name" value="PROTEIN_KINASE_DOM"/>
    <property type="match status" value="1"/>
</dbReference>
<dbReference type="PROSITE" id="PS00108">
    <property type="entry name" value="PROTEIN_KINASE_ST"/>
    <property type="match status" value="1"/>
</dbReference>
<organism>
    <name type="scientific">Carassius auratus</name>
    <name type="common">Goldfish</name>
    <dbReference type="NCBI Taxonomy" id="7957"/>
    <lineage>
        <taxon>Eukaryota</taxon>
        <taxon>Metazoa</taxon>
        <taxon>Chordata</taxon>
        <taxon>Craniata</taxon>
        <taxon>Vertebrata</taxon>
        <taxon>Euteleostomi</taxon>
        <taxon>Actinopterygii</taxon>
        <taxon>Neopterygii</taxon>
        <taxon>Teleostei</taxon>
        <taxon>Ostariophysi</taxon>
        <taxon>Cypriniformes</taxon>
        <taxon>Cyprinidae</taxon>
        <taxon>Cyprininae</taxon>
        <taxon>Carassius</taxon>
    </lineage>
</organism>
<proteinExistence type="evidence at protein level"/>
<protein>
    <recommendedName>
        <fullName>Cyclin-dependent kinase 2</fullName>
        <ecNumber evidence="5">2.7.11.22</ecNumber>
    </recommendedName>
    <alternativeName>
        <fullName>Cell division protein kinase 2</fullName>
    </alternativeName>
</protein>
<evidence type="ECO:0000250" key="1">
    <source>
        <dbReference type="UniProtKB" id="P23437"/>
    </source>
</evidence>
<evidence type="ECO:0000250" key="2">
    <source>
        <dbReference type="UniProtKB" id="P24941"/>
    </source>
</evidence>
<evidence type="ECO:0000255" key="3">
    <source>
        <dbReference type="PROSITE-ProRule" id="PRU00159"/>
    </source>
</evidence>
<evidence type="ECO:0000255" key="4">
    <source>
        <dbReference type="PROSITE-ProRule" id="PRU10027"/>
    </source>
</evidence>
<evidence type="ECO:0000269" key="5">
    <source>
    </source>
</evidence>
<evidence type="ECO:0000305" key="6"/>
<name>CDK2_CARAU</name>